<reference key="1">
    <citation type="journal article" date="2000" name="Thromb. Haemost.">
        <title>A novel fibrinogen-clotting enzyme, TL-BJ, from the venom of the snake Bothrops jararaca: purification and characterization.</title>
        <authorList>
            <person name="Serrano S.M.T."/>
            <person name="Sampaio C.A.M."/>
            <person name="Mentele R."/>
            <person name="Camargo A.C.M."/>
            <person name="Fink E."/>
        </authorList>
    </citation>
    <scope>PROTEIN SEQUENCE</scope>
    <scope>FUNCTION</scope>
    <scope>ACTIVITY REGULATION</scope>
    <source>
        <tissue>Venom</tissue>
    </source>
</reference>
<dbReference type="EC" id="3.4.21.-"/>
<dbReference type="MEROPS" id="S01.353"/>
<dbReference type="GO" id="GO:0005576">
    <property type="term" value="C:extracellular region"/>
    <property type="evidence" value="ECO:0007669"/>
    <property type="project" value="UniProtKB-SubCell"/>
</dbReference>
<dbReference type="GO" id="GO:0008236">
    <property type="term" value="F:serine-type peptidase activity"/>
    <property type="evidence" value="ECO:0007669"/>
    <property type="project" value="UniProtKB-KW"/>
</dbReference>
<dbReference type="GO" id="GO:0090729">
    <property type="term" value="F:toxin activity"/>
    <property type="evidence" value="ECO:0007669"/>
    <property type="project" value="UniProtKB-KW"/>
</dbReference>
<dbReference type="GO" id="GO:0006508">
    <property type="term" value="P:proteolysis"/>
    <property type="evidence" value="ECO:0007669"/>
    <property type="project" value="UniProtKB-KW"/>
</dbReference>
<protein>
    <recommendedName>
        <fullName>Thrombin-like enzyme TL-BJ 3</fullName>
        <shortName>SVTLE</shortName>
        <ecNumber>3.4.21.-</ecNumber>
    </recommendedName>
    <alternativeName>
        <fullName>Fibrinogen-clotting enzyme TL-BJ isoform 3</fullName>
    </alternativeName>
    <alternativeName>
        <fullName>Snake venom serine protease</fullName>
        <shortName>SVSP</shortName>
    </alternativeName>
</protein>
<organism>
    <name type="scientific">Bothrops jararaca</name>
    <name type="common">Jararaca</name>
    <name type="synonym">Bothrops jajaraca</name>
    <dbReference type="NCBI Taxonomy" id="8724"/>
    <lineage>
        <taxon>Eukaryota</taxon>
        <taxon>Metazoa</taxon>
        <taxon>Chordata</taxon>
        <taxon>Craniata</taxon>
        <taxon>Vertebrata</taxon>
        <taxon>Euteleostomi</taxon>
        <taxon>Lepidosauria</taxon>
        <taxon>Squamata</taxon>
        <taxon>Bifurcata</taxon>
        <taxon>Unidentata</taxon>
        <taxon>Episquamata</taxon>
        <taxon>Toxicofera</taxon>
        <taxon>Serpentes</taxon>
        <taxon>Colubroidea</taxon>
        <taxon>Viperidae</taxon>
        <taxon>Crotalinae</taxon>
        <taxon>Bothrops</taxon>
    </lineage>
</organism>
<name>VSPT3_BOTJA</name>
<keyword id="KW-1204">Blood coagulation cascade activating toxin</keyword>
<keyword id="KW-0903">Direct protein sequencing</keyword>
<keyword id="KW-1199">Hemostasis impairing toxin</keyword>
<keyword id="KW-0378">Hydrolase</keyword>
<keyword id="KW-0645">Protease</keyword>
<keyword id="KW-0964">Secreted</keyword>
<keyword id="KW-0720">Serine protease</keyword>
<keyword id="KW-0800">Toxin</keyword>
<proteinExistence type="evidence at protein level"/>
<comment type="function">
    <text evidence="3">Thrombin-like snake venom serine protease. Causes the specific clotting of fibrinogen (FGA) with release of fibrinopeptide A. The aberrant fibrinogen is then incapable of being cross-linked, forming easily dispersible clots.</text>
</comment>
<comment type="activity regulation">
    <text evidence="3">Inhibited by PMSF, but not by hirudin.</text>
</comment>
<comment type="subunit">
    <text evidence="1">Monomer.</text>
</comment>
<comment type="subcellular location">
    <subcellularLocation>
        <location>Secreted</location>
    </subcellularLocation>
</comment>
<comment type="tissue specificity">
    <text>Expressed by the venom gland.</text>
</comment>
<comment type="PTM">
    <text>Not glycosylated.</text>
</comment>
<comment type="similarity">
    <text evidence="2">Belongs to the peptidase S1 family. Snake venom subfamily.</text>
</comment>
<feature type="chain" id="PRO_0000088735" description="Thrombin-like enzyme TL-BJ 3">
    <location>
        <begin position="1"/>
        <end position="19" status="greater than"/>
    </location>
</feature>
<feature type="domain" description="Peptidase S1" evidence="2">
    <location>
        <begin position="1"/>
        <end position="19" status="greater than"/>
    </location>
</feature>
<feature type="non-terminal residue">
    <location>
        <position position="19"/>
    </location>
</feature>
<accession>P81884</accession>
<sequence length="19" mass="2072">VVGGDECNINEHRSLVAIF</sequence>
<evidence type="ECO:0000250" key="1"/>
<evidence type="ECO:0000255" key="2">
    <source>
        <dbReference type="PROSITE-ProRule" id="PRU00274"/>
    </source>
</evidence>
<evidence type="ECO:0000269" key="3">
    <source>
    </source>
</evidence>